<accession>Q12NU0</accession>
<sequence length="327" mass="37126">MQQLTEIVAQALAEVANASDLKALDDIRVDYLGKKGKITDMMKMMGSLSAEEKPAFGQAVNQAKQAVQQTLSERIDGLKASELEAKLIAEKIDVTLPGRTLELGGLHPVTRTIERIETFFGELGFVVKQGPEIEDDFHNFDALNISEHHPARADHDTFYFNPKVMLRTQTSGVQIRTMEHEKPPLRIISPGRVYRNDYDQTHTPMFHQVEGLMVAENVNFAELKGILHDFLRNFFEEDLQVRFRPSYFPFTEPSAEVDVMGKNGKWLEVLGCGMVHPNVLRSVGIDPEKYSGFAFGMGVERLTMLRYGVNDLRAFFENDLRFLKQFK</sequence>
<feature type="chain" id="PRO_1000006895" description="Phenylalanine--tRNA ligase alpha subunit">
    <location>
        <begin position="1"/>
        <end position="327"/>
    </location>
</feature>
<feature type="binding site" evidence="1">
    <location>
        <position position="252"/>
    </location>
    <ligand>
        <name>Mg(2+)</name>
        <dbReference type="ChEBI" id="CHEBI:18420"/>
        <note>shared with beta subunit</note>
    </ligand>
</feature>
<protein>
    <recommendedName>
        <fullName evidence="1">Phenylalanine--tRNA ligase alpha subunit</fullName>
        <ecNumber evidence="1">6.1.1.20</ecNumber>
    </recommendedName>
    <alternativeName>
        <fullName evidence="1">Phenylalanyl-tRNA synthetase alpha subunit</fullName>
        <shortName evidence="1">PheRS</shortName>
    </alternativeName>
</protein>
<keyword id="KW-0030">Aminoacyl-tRNA synthetase</keyword>
<keyword id="KW-0067">ATP-binding</keyword>
<keyword id="KW-0963">Cytoplasm</keyword>
<keyword id="KW-0436">Ligase</keyword>
<keyword id="KW-0460">Magnesium</keyword>
<keyword id="KW-0479">Metal-binding</keyword>
<keyword id="KW-0547">Nucleotide-binding</keyword>
<keyword id="KW-0648">Protein biosynthesis</keyword>
<keyword id="KW-1185">Reference proteome</keyword>
<organism>
    <name type="scientific">Shewanella denitrificans (strain OS217 / ATCC BAA-1090 / DSM 15013)</name>
    <dbReference type="NCBI Taxonomy" id="318161"/>
    <lineage>
        <taxon>Bacteria</taxon>
        <taxon>Pseudomonadati</taxon>
        <taxon>Pseudomonadota</taxon>
        <taxon>Gammaproteobacteria</taxon>
        <taxon>Alteromonadales</taxon>
        <taxon>Shewanellaceae</taxon>
        <taxon>Shewanella</taxon>
    </lineage>
</organism>
<dbReference type="EC" id="6.1.1.20" evidence="1"/>
<dbReference type="EMBL" id="CP000302">
    <property type="protein sequence ID" value="ABE54886.1"/>
    <property type="molecule type" value="Genomic_DNA"/>
</dbReference>
<dbReference type="RefSeq" id="WP_011496044.1">
    <property type="nucleotide sequence ID" value="NC_007954.1"/>
</dbReference>
<dbReference type="SMR" id="Q12NU0"/>
<dbReference type="STRING" id="318161.Sden_1602"/>
<dbReference type="KEGG" id="sdn:Sden_1602"/>
<dbReference type="eggNOG" id="COG0016">
    <property type="taxonomic scope" value="Bacteria"/>
</dbReference>
<dbReference type="HOGENOM" id="CLU_025086_0_1_6"/>
<dbReference type="OrthoDB" id="9800719at2"/>
<dbReference type="Proteomes" id="UP000001982">
    <property type="component" value="Chromosome"/>
</dbReference>
<dbReference type="GO" id="GO:0005737">
    <property type="term" value="C:cytoplasm"/>
    <property type="evidence" value="ECO:0007669"/>
    <property type="project" value="UniProtKB-SubCell"/>
</dbReference>
<dbReference type="GO" id="GO:0005524">
    <property type="term" value="F:ATP binding"/>
    <property type="evidence" value="ECO:0007669"/>
    <property type="project" value="UniProtKB-UniRule"/>
</dbReference>
<dbReference type="GO" id="GO:0000287">
    <property type="term" value="F:magnesium ion binding"/>
    <property type="evidence" value="ECO:0007669"/>
    <property type="project" value="UniProtKB-UniRule"/>
</dbReference>
<dbReference type="GO" id="GO:0004826">
    <property type="term" value="F:phenylalanine-tRNA ligase activity"/>
    <property type="evidence" value="ECO:0007669"/>
    <property type="project" value="UniProtKB-UniRule"/>
</dbReference>
<dbReference type="GO" id="GO:0000049">
    <property type="term" value="F:tRNA binding"/>
    <property type="evidence" value="ECO:0007669"/>
    <property type="project" value="InterPro"/>
</dbReference>
<dbReference type="GO" id="GO:0006432">
    <property type="term" value="P:phenylalanyl-tRNA aminoacylation"/>
    <property type="evidence" value="ECO:0007669"/>
    <property type="project" value="UniProtKB-UniRule"/>
</dbReference>
<dbReference type="CDD" id="cd00496">
    <property type="entry name" value="PheRS_alpha_core"/>
    <property type="match status" value="1"/>
</dbReference>
<dbReference type="FunFam" id="3.30.930.10:FF:000003">
    <property type="entry name" value="Phenylalanine--tRNA ligase alpha subunit"/>
    <property type="match status" value="1"/>
</dbReference>
<dbReference type="Gene3D" id="3.30.930.10">
    <property type="entry name" value="Bira Bifunctional Protein, Domain 2"/>
    <property type="match status" value="1"/>
</dbReference>
<dbReference type="HAMAP" id="MF_00281">
    <property type="entry name" value="Phe_tRNA_synth_alpha1"/>
    <property type="match status" value="1"/>
</dbReference>
<dbReference type="InterPro" id="IPR006195">
    <property type="entry name" value="aa-tRNA-synth_II"/>
</dbReference>
<dbReference type="InterPro" id="IPR045864">
    <property type="entry name" value="aa-tRNA-synth_II/BPL/LPL"/>
</dbReference>
<dbReference type="InterPro" id="IPR004529">
    <property type="entry name" value="Phe-tRNA-synth_IIc_asu"/>
</dbReference>
<dbReference type="InterPro" id="IPR004188">
    <property type="entry name" value="Phe-tRNA_ligase_II_N"/>
</dbReference>
<dbReference type="InterPro" id="IPR022911">
    <property type="entry name" value="Phe_tRNA_ligase_alpha1_bac"/>
</dbReference>
<dbReference type="InterPro" id="IPR002319">
    <property type="entry name" value="Phenylalanyl-tRNA_Synthase"/>
</dbReference>
<dbReference type="InterPro" id="IPR010978">
    <property type="entry name" value="tRNA-bd_arm"/>
</dbReference>
<dbReference type="NCBIfam" id="TIGR00468">
    <property type="entry name" value="pheS"/>
    <property type="match status" value="1"/>
</dbReference>
<dbReference type="PANTHER" id="PTHR11538:SF41">
    <property type="entry name" value="PHENYLALANINE--TRNA LIGASE, MITOCHONDRIAL"/>
    <property type="match status" value="1"/>
</dbReference>
<dbReference type="PANTHER" id="PTHR11538">
    <property type="entry name" value="PHENYLALANYL-TRNA SYNTHETASE"/>
    <property type="match status" value="1"/>
</dbReference>
<dbReference type="Pfam" id="PF02912">
    <property type="entry name" value="Phe_tRNA-synt_N"/>
    <property type="match status" value="1"/>
</dbReference>
<dbReference type="Pfam" id="PF01409">
    <property type="entry name" value="tRNA-synt_2d"/>
    <property type="match status" value="1"/>
</dbReference>
<dbReference type="SUPFAM" id="SSF55681">
    <property type="entry name" value="Class II aaRS and biotin synthetases"/>
    <property type="match status" value="1"/>
</dbReference>
<dbReference type="SUPFAM" id="SSF46589">
    <property type="entry name" value="tRNA-binding arm"/>
    <property type="match status" value="1"/>
</dbReference>
<dbReference type="PROSITE" id="PS50862">
    <property type="entry name" value="AA_TRNA_LIGASE_II"/>
    <property type="match status" value="1"/>
</dbReference>
<comment type="catalytic activity">
    <reaction evidence="1">
        <text>tRNA(Phe) + L-phenylalanine + ATP = L-phenylalanyl-tRNA(Phe) + AMP + diphosphate + H(+)</text>
        <dbReference type="Rhea" id="RHEA:19413"/>
        <dbReference type="Rhea" id="RHEA-COMP:9668"/>
        <dbReference type="Rhea" id="RHEA-COMP:9699"/>
        <dbReference type="ChEBI" id="CHEBI:15378"/>
        <dbReference type="ChEBI" id="CHEBI:30616"/>
        <dbReference type="ChEBI" id="CHEBI:33019"/>
        <dbReference type="ChEBI" id="CHEBI:58095"/>
        <dbReference type="ChEBI" id="CHEBI:78442"/>
        <dbReference type="ChEBI" id="CHEBI:78531"/>
        <dbReference type="ChEBI" id="CHEBI:456215"/>
        <dbReference type="EC" id="6.1.1.20"/>
    </reaction>
</comment>
<comment type="cofactor">
    <cofactor evidence="1">
        <name>Mg(2+)</name>
        <dbReference type="ChEBI" id="CHEBI:18420"/>
    </cofactor>
    <text evidence="1">Binds 2 magnesium ions per tetramer.</text>
</comment>
<comment type="subunit">
    <text evidence="1">Tetramer of two alpha and two beta subunits.</text>
</comment>
<comment type="subcellular location">
    <subcellularLocation>
        <location evidence="1">Cytoplasm</location>
    </subcellularLocation>
</comment>
<comment type="similarity">
    <text evidence="1">Belongs to the class-II aminoacyl-tRNA synthetase family. Phe-tRNA synthetase alpha subunit type 1 subfamily.</text>
</comment>
<reference key="1">
    <citation type="submission" date="2006-03" db="EMBL/GenBank/DDBJ databases">
        <title>Complete sequence of Shewanella denitrificans OS217.</title>
        <authorList>
            <consortium name="US DOE Joint Genome Institute"/>
            <person name="Copeland A."/>
            <person name="Lucas S."/>
            <person name="Lapidus A."/>
            <person name="Barry K."/>
            <person name="Detter J.C."/>
            <person name="Glavina del Rio T."/>
            <person name="Hammon N."/>
            <person name="Israni S."/>
            <person name="Dalin E."/>
            <person name="Tice H."/>
            <person name="Pitluck S."/>
            <person name="Brettin T."/>
            <person name="Bruce D."/>
            <person name="Han C."/>
            <person name="Tapia R."/>
            <person name="Gilna P."/>
            <person name="Kiss H."/>
            <person name="Schmutz J."/>
            <person name="Larimer F."/>
            <person name="Land M."/>
            <person name="Hauser L."/>
            <person name="Kyrpides N."/>
            <person name="Lykidis A."/>
            <person name="Richardson P."/>
        </authorList>
    </citation>
    <scope>NUCLEOTIDE SEQUENCE [LARGE SCALE GENOMIC DNA]</scope>
    <source>
        <strain>OS217 / ATCC BAA-1090 / DSM 15013</strain>
    </source>
</reference>
<evidence type="ECO:0000255" key="1">
    <source>
        <dbReference type="HAMAP-Rule" id="MF_00281"/>
    </source>
</evidence>
<gene>
    <name evidence="1" type="primary">pheS</name>
    <name type="ordered locus">Sden_1602</name>
</gene>
<name>SYFA_SHEDO</name>
<proteinExistence type="inferred from homology"/>